<accession>P78005</accession>
<proteinExistence type="inferred from homology"/>
<feature type="chain" id="PRO_0000202007" description="Uncharacterized metal-dependent hydrolase MPN_009">
    <location>
        <begin position="1"/>
        <end position="261"/>
    </location>
</feature>
<feature type="binding site" evidence="1">
    <location>
        <position position="7"/>
    </location>
    <ligand>
        <name>a divalent metal cation</name>
        <dbReference type="ChEBI" id="CHEBI:60240"/>
        <label>1</label>
    </ligand>
</feature>
<feature type="binding site" evidence="1">
    <location>
        <position position="9"/>
    </location>
    <ligand>
        <name>a divalent metal cation</name>
        <dbReference type="ChEBI" id="CHEBI:60240"/>
        <label>1</label>
    </ligand>
</feature>
<feature type="binding site" evidence="1">
    <location>
        <position position="96"/>
    </location>
    <ligand>
        <name>a divalent metal cation</name>
        <dbReference type="ChEBI" id="CHEBI:60240"/>
        <label>1</label>
    </ligand>
</feature>
<feature type="binding site" evidence="1">
    <location>
        <position position="96"/>
    </location>
    <ligand>
        <name>a divalent metal cation</name>
        <dbReference type="ChEBI" id="CHEBI:60240"/>
        <label>2</label>
    </ligand>
</feature>
<feature type="binding site" evidence="1">
    <location>
        <position position="132"/>
    </location>
    <ligand>
        <name>a divalent metal cation</name>
        <dbReference type="ChEBI" id="CHEBI:60240"/>
        <label>2</label>
    </ligand>
</feature>
<feature type="binding site" evidence="1">
    <location>
        <position position="156"/>
    </location>
    <ligand>
        <name>a divalent metal cation</name>
        <dbReference type="ChEBI" id="CHEBI:60240"/>
        <label>2</label>
    </ligand>
</feature>
<feature type="binding site" evidence="1">
    <location>
        <position position="211"/>
    </location>
    <ligand>
        <name>a divalent metal cation</name>
        <dbReference type="ChEBI" id="CHEBI:60240"/>
        <label>1</label>
    </ligand>
</feature>
<name>Y009_MYCPN</name>
<evidence type="ECO:0000250" key="1">
    <source>
        <dbReference type="UniProtKB" id="P0AFQ7"/>
    </source>
</evidence>
<evidence type="ECO:0000305" key="2"/>
<organism>
    <name type="scientific">Mycoplasma pneumoniae (strain ATCC 29342 / M129 / Subtype 1)</name>
    <name type="common">Mycoplasmoides pneumoniae</name>
    <dbReference type="NCBI Taxonomy" id="272634"/>
    <lineage>
        <taxon>Bacteria</taxon>
        <taxon>Bacillati</taxon>
        <taxon>Mycoplasmatota</taxon>
        <taxon>Mycoplasmoidales</taxon>
        <taxon>Mycoplasmoidaceae</taxon>
        <taxon>Mycoplasmoides</taxon>
    </lineage>
</organism>
<dbReference type="EC" id="3.1.-.-" evidence="2"/>
<dbReference type="EMBL" id="U00089">
    <property type="protein sequence ID" value="AAB95793.1"/>
    <property type="molecule type" value="Genomic_DNA"/>
</dbReference>
<dbReference type="PIR" id="S73471">
    <property type="entry name" value="S73471"/>
</dbReference>
<dbReference type="RefSeq" id="NP_109697.1">
    <property type="nucleotide sequence ID" value="NC_000912.1"/>
</dbReference>
<dbReference type="RefSeq" id="WP_010874366.1">
    <property type="nucleotide sequence ID" value="NZ_OU342337.1"/>
</dbReference>
<dbReference type="SMR" id="P78005"/>
<dbReference type="IntAct" id="P78005">
    <property type="interactions" value="5"/>
</dbReference>
<dbReference type="STRING" id="272634.MPN_009"/>
<dbReference type="EnsemblBacteria" id="AAB95793">
    <property type="protein sequence ID" value="AAB95793"/>
    <property type="gene ID" value="MPN_009"/>
</dbReference>
<dbReference type="KEGG" id="mpn:MPN_009"/>
<dbReference type="PATRIC" id="fig|272634.6.peg.9"/>
<dbReference type="HOGENOM" id="CLU_031506_4_0_14"/>
<dbReference type="OrthoDB" id="9810005at2"/>
<dbReference type="BioCyc" id="MPNE272634:G1GJ3-12-MONOMER"/>
<dbReference type="Proteomes" id="UP000000808">
    <property type="component" value="Chromosome"/>
</dbReference>
<dbReference type="GO" id="GO:0005829">
    <property type="term" value="C:cytosol"/>
    <property type="evidence" value="ECO:0007669"/>
    <property type="project" value="TreeGrafter"/>
</dbReference>
<dbReference type="GO" id="GO:0004536">
    <property type="term" value="F:DNA nuclease activity"/>
    <property type="evidence" value="ECO:0007669"/>
    <property type="project" value="InterPro"/>
</dbReference>
<dbReference type="GO" id="GO:0046872">
    <property type="term" value="F:metal ion binding"/>
    <property type="evidence" value="ECO:0007669"/>
    <property type="project" value="UniProtKB-KW"/>
</dbReference>
<dbReference type="CDD" id="cd01310">
    <property type="entry name" value="TatD_DNAse"/>
    <property type="match status" value="1"/>
</dbReference>
<dbReference type="FunFam" id="3.20.20.140:FF:000005">
    <property type="entry name" value="TatD family hydrolase"/>
    <property type="match status" value="1"/>
</dbReference>
<dbReference type="Gene3D" id="3.20.20.140">
    <property type="entry name" value="Metal-dependent hydrolases"/>
    <property type="match status" value="1"/>
</dbReference>
<dbReference type="InterPro" id="IPR018228">
    <property type="entry name" value="DNase_TatD-rel_CS"/>
</dbReference>
<dbReference type="InterPro" id="IPR032466">
    <property type="entry name" value="Metal_Hydrolase"/>
</dbReference>
<dbReference type="InterPro" id="IPR001130">
    <property type="entry name" value="TatD-like"/>
</dbReference>
<dbReference type="InterPro" id="IPR015991">
    <property type="entry name" value="TatD/YcfH-like"/>
</dbReference>
<dbReference type="NCBIfam" id="TIGR00010">
    <property type="entry name" value="YchF/TatD family DNA exonuclease"/>
    <property type="match status" value="1"/>
</dbReference>
<dbReference type="PANTHER" id="PTHR46124">
    <property type="entry name" value="D-AMINOACYL-TRNA DEACYLASE"/>
    <property type="match status" value="1"/>
</dbReference>
<dbReference type="PANTHER" id="PTHR46124:SF2">
    <property type="entry name" value="D-AMINOACYL-TRNA DEACYLASE"/>
    <property type="match status" value="1"/>
</dbReference>
<dbReference type="Pfam" id="PF01026">
    <property type="entry name" value="TatD_DNase"/>
    <property type="match status" value="1"/>
</dbReference>
<dbReference type="PIRSF" id="PIRSF005902">
    <property type="entry name" value="DNase_TatD"/>
    <property type="match status" value="1"/>
</dbReference>
<dbReference type="SUPFAM" id="SSF51556">
    <property type="entry name" value="Metallo-dependent hydrolases"/>
    <property type="match status" value="1"/>
</dbReference>
<dbReference type="PROSITE" id="PS01137">
    <property type="entry name" value="TATD_1"/>
    <property type="match status" value="1"/>
</dbReference>
<dbReference type="PROSITE" id="PS01091">
    <property type="entry name" value="TATD_3"/>
    <property type="match status" value="1"/>
</dbReference>
<protein>
    <recommendedName>
        <fullName evidence="2">Uncharacterized metal-dependent hydrolase MPN_009</fullName>
        <ecNumber evidence="2">3.1.-.-</ecNumber>
    </recommendedName>
</protein>
<reference key="1">
    <citation type="journal article" date="1996" name="Nucleic Acids Res.">
        <title>Complete sequence analysis of the genome of the bacterium Mycoplasma pneumoniae.</title>
        <authorList>
            <person name="Himmelreich R."/>
            <person name="Hilbert H."/>
            <person name="Plagens H."/>
            <person name="Pirkl E."/>
            <person name="Li B.-C."/>
            <person name="Herrmann R."/>
        </authorList>
    </citation>
    <scope>NUCLEOTIDE SEQUENCE [LARGE SCALE GENOMIC DNA]</scope>
    <source>
        <strain>ATCC 29342 / M129 / Subtype 1</strain>
    </source>
</reference>
<keyword id="KW-0378">Hydrolase</keyword>
<keyword id="KW-0479">Metal-binding</keyword>
<keyword id="KW-1185">Reference proteome</keyword>
<comment type="cofactor">
    <cofactor evidence="1">
        <name>a divalent metal cation</name>
        <dbReference type="ChEBI" id="CHEBI:60240"/>
    </cofactor>
    <text evidence="1">Binds 2 divalent metal cations per subunit.</text>
</comment>
<comment type="similarity">
    <text evidence="2">Belongs to the metallo-dependent hydrolases superfamily. TatD-type hydrolase family.</text>
</comment>
<gene>
    <name type="ordered locus">MPN_009</name>
    <name type="ORF">D12_orf261</name>
    <name type="ORF">MP145</name>
</gene>
<sequence>MEYFDAHCHLNCEPLLEQHEKSLANFRLIGLKANVVGTNLTNSQIAVNLAKQHPDLLKAGVGIHPNDVQLFDLKAAQATLKKLVSTHRSFISCIGEYGFDYHYTKDYITQQEQFFLMQFQLAEQYQLVHMLHVRDVHERIYEVLKRLKPKQPVVFHCFSEDTNTALKLLTLREVGLKVYFSIPGIVTFKNAKNLQAALSVIPTELLLSETDSPYLAPVPFRGKTNWPECVVHTVQTIADIKQVPLAEIKQAIVHNAKKLFW</sequence>